<dbReference type="EMBL" id="BC158684">
    <property type="protein sequence ID" value="AAI58685.1"/>
    <property type="molecule type" value="mRNA"/>
</dbReference>
<dbReference type="RefSeq" id="NP_001107258.2">
    <property type="nucleotide sequence ID" value="NM_001113786.2"/>
</dbReference>
<dbReference type="SMR" id="B0BN49"/>
<dbReference type="FunCoup" id="B0BN49">
    <property type="interactions" value="869"/>
</dbReference>
<dbReference type="STRING" id="10116.ENSRNOP00000043159"/>
<dbReference type="iPTMnet" id="B0BN49"/>
<dbReference type="PhosphoSitePlus" id="B0BN49"/>
<dbReference type="PaxDb" id="10116-ENSRNOP00000043159"/>
<dbReference type="Ensembl" id="ENSRNOT00000048922.7">
    <property type="protein sequence ID" value="ENSRNOP00000043159.4"/>
    <property type="gene ID" value="ENSRNOG00000007371.9"/>
</dbReference>
<dbReference type="GeneID" id="367930"/>
<dbReference type="KEGG" id="rno:367930"/>
<dbReference type="UCSC" id="RGD:1562693">
    <property type="organism name" value="rat"/>
</dbReference>
<dbReference type="AGR" id="RGD:1562693"/>
<dbReference type="CTD" id="51634"/>
<dbReference type="RGD" id="1562693">
    <property type="gene designation" value="Rbmx2"/>
</dbReference>
<dbReference type="eggNOG" id="KOG0126">
    <property type="taxonomic scope" value="Eukaryota"/>
</dbReference>
<dbReference type="GeneTree" id="ENSGT00890000139472"/>
<dbReference type="HOGENOM" id="CLU_045495_1_0_1"/>
<dbReference type="InParanoid" id="B0BN49"/>
<dbReference type="OMA" id="GSWHVDY"/>
<dbReference type="OrthoDB" id="2573941at2759"/>
<dbReference type="PhylomeDB" id="B0BN49"/>
<dbReference type="Reactome" id="R-RNO-72163">
    <property type="pathway name" value="mRNA Splicing - Major Pathway"/>
</dbReference>
<dbReference type="PRO" id="PR:B0BN49"/>
<dbReference type="Proteomes" id="UP000002494">
    <property type="component" value="Chromosome X"/>
</dbReference>
<dbReference type="Bgee" id="ENSRNOG00000007371">
    <property type="expression patterns" value="Expressed in testis and 19 other cell types or tissues"/>
</dbReference>
<dbReference type="GO" id="GO:0005634">
    <property type="term" value="C:nucleus"/>
    <property type="evidence" value="ECO:0000250"/>
    <property type="project" value="UniProtKB"/>
</dbReference>
<dbReference type="GO" id="GO:0071011">
    <property type="term" value="C:precatalytic spliceosome"/>
    <property type="evidence" value="ECO:0000318"/>
    <property type="project" value="GO_Central"/>
</dbReference>
<dbReference type="GO" id="GO:0005686">
    <property type="term" value="C:U2 snRNP"/>
    <property type="evidence" value="ECO:0000318"/>
    <property type="project" value="GO_Central"/>
</dbReference>
<dbReference type="GO" id="GO:0071005">
    <property type="term" value="C:U2-type precatalytic spliceosome"/>
    <property type="evidence" value="ECO:0000250"/>
    <property type="project" value="UniProtKB"/>
</dbReference>
<dbReference type="GO" id="GO:0003723">
    <property type="term" value="F:RNA binding"/>
    <property type="evidence" value="ECO:0007669"/>
    <property type="project" value="UniProtKB-KW"/>
</dbReference>
<dbReference type="GO" id="GO:0000398">
    <property type="term" value="P:mRNA splicing, via spliceosome"/>
    <property type="evidence" value="ECO:0000250"/>
    <property type="project" value="UniProtKB"/>
</dbReference>
<dbReference type="CDD" id="cd12411">
    <property type="entry name" value="RRM_ist3_like"/>
    <property type="match status" value="1"/>
</dbReference>
<dbReference type="FunFam" id="3.30.70.330:FF:000218">
    <property type="entry name" value="RNA-binding motif protein, X-linked 2"/>
    <property type="match status" value="1"/>
</dbReference>
<dbReference type="Gene3D" id="3.30.70.330">
    <property type="match status" value="1"/>
</dbReference>
<dbReference type="InterPro" id="IPR012677">
    <property type="entry name" value="Nucleotide-bd_a/b_plait_sf"/>
</dbReference>
<dbReference type="InterPro" id="IPR035979">
    <property type="entry name" value="RBD_domain_sf"/>
</dbReference>
<dbReference type="InterPro" id="IPR051847">
    <property type="entry name" value="RNA_proc/Spliceosome_comp"/>
</dbReference>
<dbReference type="InterPro" id="IPR000504">
    <property type="entry name" value="RRM_dom"/>
</dbReference>
<dbReference type="InterPro" id="IPR045844">
    <property type="entry name" value="RRM_Ist3-like"/>
</dbReference>
<dbReference type="PANTHER" id="PTHR45880">
    <property type="entry name" value="RNA-BINDING MOTIF PROTEIN, X-LINKED 2"/>
    <property type="match status" value="1"/>
</dbReference>
<dbReference type="PANTHER" id="PTHR45880:SF1">
    <property type="entry name" value="RNA-BINDING MOTIF PROTEIN, X-LINKED 2"/>
    <property type="match status" value="1"/>
</dbReference>
<dbReference type="Pfam" id="PF00076">
    <property type="entry name" value="RRM_1"/>
    <property type="match status" value="1"/>
</dbReference>
<dbReference type="SMART" id="SM00360">
    <property type="entry name" value="RRM"/>
    <property type="match status" value="1"/>
</dbReference>
<dbReference type="SUPFAM" id="SSF54928">
    <property type="entry name" value="RNA-binding domain, RBD"/>
    <property type="match status" value="1"/>
</dbReference>
<dbReference type="PROSITE" id="PS50102">
    <property type="entry name" value="RRM"/>
    <property type="match status" value="1"/>
</dbReference>
<comment type="function">
    <text evidence="2">Involved in pre-mRNA splicing as component of the activated spliceosome. As a component of the minor spliceosome, involved in the splicing of U12-type introns in pre-mRNAs (By similarity).</text>
</comment>
<comment type="subunit">
    <text evidence="2">Part of the activated spliceosome B/catalytic step 1 spliceosome, one of the forms of the spliceosome which has a well-formed active site but still cannot catalyze the branching reaction and is composed of at least 52 proteins, the U2, U5 and U6 snRNAs and the pre-mRNA. Component of the minor spliceosome, which splices U12-type introns (By similarity).</text>
</comment>
<comment type="subcellular location">
    <subcellularLocation>
        <location evidence="2">Nucleus</location>
    </subcellularLocation>
</comment>
<comment type="similarity">
    <text evidence="5">Belongs to the IST3 family.</text>
</comment>
<name>RBMX2_RAT</name>
<sequence length="328" mass="37829">MNPLTKVKLINELNEREVQLGVAEKVSWHSEYKDSAWIFLGGLPYELTEGDIICVFSQYGEIVNINLVRDKKTGKSKGFCFLCYEDQRSTVLAVDNFNGIKIKGRTIRVDHVANYRAPQESEDVDDVTRELQEKGCGAKTPPSSPPEVSEDEDAKVTKKPKKDKKEKKKKKEKEKTERPVQAELPSCSRSKTVKETDEQSAKKHSSKPSERAQKSECRERKKSHSGSPDGRTSCRGRAEEPEWEAKKEKHKHEHKPSSRREGEEKSRDKDRGRSSGTHSSRHHGHSEGRSHRSRSRSRSRSPDRSHRHKKHRYSHERESFHASDRRHY</sequence>
<organism>
    <name type="scientific">Rattus norvegicus</name>
    <name type="common">Rat</name>
    <dbReference type="NCBI Taxonomy" id="10116"/>
    <lineage>
        <taxon>Eukaryota</taxon>
        <taxon>Metazoa</taxon>
        <taxon>Chordata</taxon>
        <taxon>Craniata</taxon>
        <taxon>Vertebrata</taxon>
        <taxon>Euteleostomi</taxon>
        <taxon>Mammalia</taxon>
        <taxon>Eutheria</taxon>
        <taxon>Euarchontoglires</taxon>
        <taxon>Glires</taxon>
        <taxon>Rodentia</taxon>
        <taxon>Myomorpha</taxon>
        <taxon>Muroidea</taxon>
        <taxon>Muridae</taxon>
        <taxon>Murinae</taxon>
        <taxon>Rattus</taxon>
    </lineage>
</organism>
<protein>
    <recommendedName>
        <fullName>RNA-binding motif protein, X-linked 2</fullName>
    </recommendedName>
</protein>
<keyword id="KW-1017">Isopeptide bond</keyword>
<keyword id="KW-0507">mRNA processing</keyword>
<keyword id="KW-0508">mRNA splicing</keyword>
<keyword id="KW-0539">Nucleus</keyword>
<keyword id="KW-0597">Phosphoprotein</keyword>
<keyword id="KW-1185">Reference proteome</keyword>
<keyword id="KW-0694">RNA-binding</keyword>
<keyword id="KW-0747">Spliceosome</keyword>
<keyword id="KW-0832">Ubl conjugation</keyword>
<reference key="1">
    <citation type="journal article" date="2004" name="Genome Res.">
        <title>The status, quality, and expansion of the NIH full-length cDNA project: the Mammalian Gene Collection (MGC).</title>
        <authorList>
            <consortium name="The MGC Project Team"/>
        </authorList>
    </citation>
    <scope>NUCLEOTIDE SEQUENCE [LARGE SCALE MRNA]</scope>
    <source>
        <tissue>Liver</tissue>
    </source>
</reference>
<accession>B0BN49</accession>
<proteinExistence type="evidence at transcript level"/>
<evidence type="ECO:0000250" key="1">
    <source>
        <dbReference type="UniProtKB" id="Q8R0F5"/>
    </source>
</evidence>
<evidence type="ECO:0000250" key="2">
    <source>
        <dbReference type="UniProtKB" id="Q9Y388"/>
    </source>
</evidence>
<evidence type="ECO:0000255" key="3">
    <source>
        <dbReference type="PROSITE-ProRule" id="PRU00176"/>
    </source>
</evidence>
<evidence type="ECO:0000256" key="4">
    <source>
        <dbReference type="SAM" id="MobiDB-lite"/>
    </source>
</evidence>
<evidence type="ECO:0000305" key="5"/>
<feature type="chain" id="PRO_0000414749" description="RNA-binding motif protein, X-linked 2">
    <location>
        <begin position="1"/>
        <end position="328"/>
    </location>
</feature>
<feature type="domain" description="RRM" evidence="3">
    <location>
        <begin position="36"/>
        <end position="114"/>
    </location>
</feature>
<feature type="region of interest" description="Disordered" evidence="4">
    <location>
        <begin position="118"/>
        <end position="328"/>
    </location>
</feature>
<feature type="compositionally biased region" description="Basic residues" evidence="4">
    <location>
        <begin position="157"/>
        <end position="172"/>
    </location>
</feature>
<feature type="compositionally biased region" description="Basic and acidic residues" evidence="4">
    <location>
        <begin position="192"/>
        <end position="219"/>
    </location>
</feature>
<feature type="compositionally biased region" description="Basic and acidic residues" evidence="4">
    <location>
        <begin position="236"/>
        <end position="247"/>
    </location>
</feature>
<feature type="compositionally biased region" description="Basic and acidic residues" evidence="4">
    <location>
        <begin position="255"/>
        <end position="273"/>
    </location>
</feature>
<feature type="compositionally biased region" description="Basic residues" evidence="4">
    <location>
        <begin position="291"/>
        <end position="314"/>
    </location>
</feature>
<feature type="compositionally biased region" description="Basic and acidic residues" evidence="4">
    <location>
        <begin position="315"/>
        <end position="328"/>
    </location>
</feature>
<feature type="modified residue" description="Phosphothreonine" evidence="1">
    <location>
        <position position="140"/>
    </location>
</feature>
<feature type="modified residue" description="Phosphoserine" evidence="1">
    <location>
        <position position="149"/>
    </location>
</feature>
<feature type="modified residue" description="Phosphoserine" evidence="2">
    <location>
        <position position="274"/>
    </location>
</feature>
<feature type="cross-link" description="Glycyl lysine isopeptide (Lys-Gly) (interchain with G-Cter in SUMO2)" evidence="2">
    <location>
        <position position="8"/>
    </location>
</feature>
<feature type="cross-link" description="Glycyl lysine isopeptide (Lys-Gly) (interchain with G-Cter in SUMO2)" evidence="2">
    <location>
        <position position="246"/>
    </location>
</feature>
<gene>
    <name type="primary">Rbmx2</name>
</gene>